<organism>
    <name type="scientific">Salmonella newport (strain SL254)</name>
    <dbReference type="NCBI Taxonomy" id="423368"/>
    <lineage>
        <taxon>Bacteria</taxon>
        <taxon>Pseudomonadati</taxon>
        <taxon>Pseudomonadota</taxon>
        <taxon>Gammaproteobacteria</taxon>
        <taxon>Enterobacterales</taxon>
        <taxon>Enterobacteriaceae</taxon>
        <taxon>Salmonella</taxon>
    </lineage>
</organism>
<comment type="function">
    <text evidence="1">Catalyzes the oxidation of 5,10-methylenetetrahydrofolate to 5,10-methenyltetrahydrofolate and then the hydrolysis of 5,10-methenyltetrahydrofolate to 10-formyltetrahydrofolate.</text>
</comment>
<comment type="catalytic activity">
    <reaction evidence="1">
        <text>(6R)-5,10-methylene-5,6,7,8-tetrahydrofolate + NADP(+) = (6R)-5,10-methenyltetrahydrofolate + NADPH</text>
        <dbReference type="Rhea" id="RHEA:22812"/>
        <dbReference type="ChEBI" id="CHEBI:15636"/>
        <dbReference type="ChEBI" id="CHEBI:57455"/>
        <dbReference type="ChEBI" id="CHEBI:57783"/>
        <dbReference type="ChEBI" id="CHEBI:58349"/>
        <dbReference type="EC" id="1.5.1.5"/>
    </reaction>
</comment>
<comment type="catalytic activity">
    <reaction evidence="1">
        <text>(6R)-5,10-methenyltetrahydrofolate + H2O = (6R)-10-formyltetrahydrofolate + H(+)</text>
        <dbReference type="Rhea" id="RHEA:23700"/>
        <dbReference type="ChEBI" id="CHEBI:15377"/>
        <dbReference type="ChEBI" id="CHEBI:15378"/>
        <dbReference type="ChEBI" id="CHEBI:57455"/>
        <dbReference type="ChEBI" id="CHEBI:195366"/>
        <dbReference type="EC" id="3.5.4.9"/>
    </reaction>
</comment>
<comment type="pathway">
    <text evidence="1">One-carbon metabolism; tetrahydrofolate interconversion.</text>
</comment>
<comment type="subunit">
    <text evidence="1">Homodimer.</text>
</comment>
<comment type="similarity">
    <text evidence="1">Belongs to the tetrahydrofolate dehydrogenase/cyclohydrolase family.</text>
</comment>
<keyword id="KW-0028">Amino-acid biosynthesis</keyword>
<keyword id="KW-0368">Histidine biosynthesis</keyword>
<keyword id="KW-0378">Hydrolase</keyword>
<keyword id="KW-0486">Methionine biosynthesis</keyword>
<keyword id="KW-0511">Multifunctional enzyme</keyword>
<keyword id="KW-0521">NADP</keyword>
<keyword id="KW-0554">One-carbon metabolism</keyword>
<keyword id="KW-0560">Oxidoreductase</keyword>
<keyword id="KW-0658">Purine biosynthesis</keyword>
<reference key="1">
    <citation type="journal article" date="2011" name="J. Bacteriol.">
        <title>Comparative genomics of 28 Salmonella enterica isolates: evidence for CRISPR-mediated adaptive sublineage evolution.</title>
        <authorList>
            <person name="Fricke W.F."/>
            <person name="Mammel M.K."/>
            <person name="McDermott P.F."/>
            <person name="Tartera C."/>
            <person name="White D.G."/>
            <person name="Leclerc J.E."/>
            <person name="Ravel J."/>
            <person name="Cebula T.A."/>
        </authorList>
    </citation>
    <scope>NUCLEOTIDE SEQUENCE [LARGE SCALE GENOMIC DNA]</scope>
    <source>
        <strain>SL254</strain>
    </source>
</reference>
<proteinExistence type="inferred from homology"/>
<sequence>MAAKIIDGKTIAQQVRSEVAQKVQARVAAGLRAPGLAVVLVGSNPASQIYVASKRKACDEVGFVSRSYDLPETTSEAELLALIDTLNADNTIDGILVQLPLPAGIDNVKVLERIAPDKDVDGFHPYNVGRLCQRAPRLRPCTPRGIVTLLERYNIDTYGLNAVVIGASNIVGRPMSMELLLAGCTTTVTHRFTKDLRHHVEHADLLIVAVGKPGFIPGEWIKEGAIVIDVGINRLENGKVVGDVVFDEAAARASYITPVPGGVGPMTVATLIENTLQACIEYHDPQGK</sequence>
<evidence type="ECO:0000255" key="1">
    <source>
        <dbReference type="HAMAP-Rule" id="MF_01576"/>
    </source>
</evidence>
<dbReference type="EC" id="1.5.1.5" evidence="1"/>
<dbReference type="EC" id="3.5.4.9" evidence="1"/>
<dbReference type="EMBL" id="CP001113">
    <property type="protein sequence ID" value="ACF63442.1"/>
    <property type="molecule type" value="Genomic_DNA"/>
</dbReference>
<dbReference type="RefSeq" id="WP_000729165.1">
    <property type="nucleotide sequence ID" value="NZ_CCMR01000003.1"/>
</dbReference>
<dbReference type="SMR" id="B4SXP7"/>
<dbReference type="KEGG" id="see:SNSL254_A0595"/>
<dbReference type="HOGENOM" id="CLU_034045_2_1_6"/>
<dbReference type="UniPathway" id="UPA00193"/>
<dbReference type="Proteomes" id="UP000008824">
    <property type="component" value="Chromosome"/>
</dbReference>
<dbReference type="GO" id="GO:0005829">
    <property type="term" value="C:cytosol"/>
    <property type="evidence" value="ECO:0007669"/>
    <property type="project" value="TreeGrafter"/>
</dbReference>
<dbReference type="GO" id="GO:0004477">
    <property type="term" value="F:methenyltetrahydrofolate cyclohydrolase activity"/>
    <property type="evidence" value="ECO:0007669"/>
    <property type="project" value="UniProtKB-UniRule"/>
</dbReference>
<dbReference type="GO" id="GO:0004488">
    <property type="term" value="F:methylenetetrahydrofolate dehydrogenase (NADP+) activity"/>
    <property type="evidence" value="ECO:0007669"/>
    <property type="project" value="UniProtKB-UniRule"/>
</dbReference>
<dbReference type="GO" id="GO:0000105">
    <property type="term" value="P:L-histidine biosynthetic process"/>
    <property type="evidence" value="ECO:0007669"/>
    <property type="project" value="UniProtKB-KW"/>
</dbReference>
<dbReference type="GO" id="GO:0009086">
    <property type="term" value="P:methionine biosynthetic process"/>
    <property type="evidence" value="ECO:0007669"/>
    <property type="project" value="UniProtKB-KW"/>
</dbReference>
<dbReference type="GO" id="GO:0006164">
    <property type="term" value="P:purine nucleotide biosynthetic process"/>
    <property type="evidence" value="ECO:0007669"/>
    <property type="project" value="UniProtKB-KW"/>
</dbReference>
<dbReference type="GO" id="GO:0035999">
    <property type="term" value="P:tetrahydrofolate interconversion"/>
    <property type="evidence" value="ECO:0007669"/>
    <property type="project" value="UniProtKB-UniRule"/>
</dbReference>
<dbReference type="CDD" id="cd01080">
    <property type="entry name" value="NAD_bind_m-THF_DH_Cyclohyd"/>
    <property type="match status" value="1"/>
</dbReference>
<dbReference type="FunFam" id="3.40.50.10860:FF:000001">
    <property type="entry name" value="Bifunctional protein FolD"/>
    <property type="match status" value="1"/>
</dbReference>
<dbReference type="FunFam" id="3.40.50.720:FF:000006">
    <property type="entry name" value="Bifunctional protein FolD"/>
    <property type="match status" value="1"/>
</dbReference>
<dbReference type="Gene3D" id="3.40.50.10860">
    <property type="entry name" value="Leucine Dehydrogenase, chain A, domain 1"/>
    <property type="match status" value="1"/>
</dbReference>
<dbReference type="Gene3D" id="3.40.50.720">
    <property type="entry name" value="NAD(P)-binding Rossmann-like Domain"/>
    <property type="match status" value="1"/>
</dbReference>
<dbReference type="HAMAP" id="MF_01576">
    <property type="entry name" value="THF_DHG_CYH"/>
    <property type="match status" value="1"/>
</dbReference>
<dbReference type="InterPro" id="IPR046346">
    <property type="entry name" value="Aminoacid_DH-like_N_sf"/>
</dbReference>
<dbReference type="InterPro" id="IPR036291">
    <property type="entry name" value="NAD(P)-bd_dom_sf"/>
</dbReference>
<dbReference type="InterPro" id="IPR000672">
    <property type="entry name" value="THF_DH/CycHdrlase"/>
</dbReference>
<dbReference type="InterPro" id="IPR020630">
    <property type="entry name" value="THF_DH/CycHdrlase_cat_dom"/>
</dbReference>
<dbReference type="InterPro" id="IPR020867">
    <property type="entry name" value="THF_DH/CycHdrlase_CS"/>
</dbReference>
<dbReference type="InterPro" id="IPR020631">
    <property type="entry name" value="THF_DH/CycHdrlase_NAD-bd_dom"/>
</dbReference>
<dbReference type="NCBIfam" id="NF008058">
    <property type="entry name" value="PRK10792.1"/>
    <property type="match status" value="1"/>
</dbReference>
<dbReference type="NCBIfam" id="NF010783">
    <property type="entry name" value="PRK14186.1"/>
    <property type="match status" value="1"/>
</dbReference>
<dbReference type="PANTHER" id="PTHR48099:SF5">
    <property type="entry name" value="C-1-TETRAHYDROFOLATE SYNTHASE, CYTOPLASMIC"/>
    <property type="match status" value="1"/>
</dbReference>
<dbReference type="PANTHER" id="PTHR48099">
    <property type="entry name" value="C-1-TETRAHYDROFOLATE SYNTHASE, CYTOPLASMIC-RELATED"/>
    <property type="match status" value="1"/>
</dbReference>
<dbReference type="Pfam" id="PF00763">
    <property type="entry name" value="THF_DHG_CYH"/>
    <property type="match status" value="1"/>
</dbReference>
<dbReference type="Pfam" id="PF02882">
    <property type="entry name" value="THF_DHG_CYH_C"/>
    <property type="match status" value="1"/>
</dbReference>
<dbReference type="PRINTS" id="PR00085">
    <property type="entry name" value="THFDHDRGNASE"/>
</dbReference>
<dbReference type="SUPFAM" id="SSF53223">
    <property type="entry name" value="Aminoacid dehydrogenase-like, N-terminal domain"/>
    <property type="match status" value="1"/>
</dbReference>
<dbReference type="SUPFAM" id="SSF51735">
    <property type="entry name" value="NAD(P)-binding Rossmann-fold domains"/>
    <property type="match status" value="1"/>
</dbReference>
<dbReference type="PROSITE" id="PS00766">
    <property type="entry name" value="THF_DHG_CYH_1"/>
    <property type="match status" value="1"/>
</dbReference>
<dbReference type="PROSITE" id="PS00767">
    <property type="entry name" value="THF_DHG_CYH_2"/>
    <property type="match status" value="1"/>
</dbReference>
<name>FOLD_SALNS</name>
<accession>B4SXP7</accession>
<protein>
    <recommendedName>
        <fullName evidence="1">Bifunctional protein FolD</fullName>
    </recommendedName>
    <domain>
        <recommendedName>
            <fullName evidence="1">Methylenetetrahydrofolate dehydrogenase</fullName>
            <ecNumber evidence="1">1.5.1.5</ecNumber>
        </recommendedName>
    </domain>
    <domain>
        <recommendedName>
            <fullName evidence="1">Methenyltetrahydrofolate cyclohydrolase</fullName>
            <ecNumber evidence="1">3.5.4.9</ecNumber>
        </recommendedName>
    </domain>
</protein>
<gene>
    <name evidence="1" type="primary">folD</name>
    <name type="ordered locus">SNSL254_A0595</name>
</gene>
<feature type="chain" id="PRO_1000196800" description="Bifunctional protein FolD">
    <location>
        <begin position="1"/>
        <end position="288"/>
    </location>
</feature>
<feature type="binding site" evidence="1">
    <location>
        <begin position="166"/>
        <end position="168"/>
    </location>
    <ligand>
        <name>NADP(+)</name>
        <dbReference type="ChEBI" id="CHEBI:58349"/>
    </ligand>
</feature>
<feature type="binding site" evidence="1">
    <location>
        <position position="232"/>
    </location>
    <ligand>
        <name>NADP(+)</name>
        <dbReference type="ChEBI" id="CHEBI:58349"/>
    </ligand>
</feature>